<keyword id="KW-0414">Isoprene biosynthesis</keyword>
<keyword id="KW-0464">Manganese</keyword>
<keyword id="KW-0479">Metal-binding</keyword>
<keyword id="KW-0521">NADP</keyword>
<keyword id="KW-0560">Oxidoreductase</keyword>
<keyword id="KW-1185">Reference proteome</keyword>
<comment type="function">
    <text evidence="1">Catalyzes the NADPH-dependent rearrangement and reduction of 1-deoxy-D-xylulose-5-phosphate (DXP) to 2-C-methyl-D-erythritol 4-phosphate (MEP).</text>
</comment>
<comment type="catalytic activity">
    <reaction evidence="1">
        <text>2-C-methyl-D-erythritol 4-phosphate + NADP(+) = 1-deoxy-D-xylulose 5-phosphate + NADPH + H(+)</text>
        <dbReference type="Rhea" id="RHEA:13717"/>
        <dbReference type="ChEBI" id="CHEBI:15378"/>
        <dbReference type="ChEBI" id="CHEBI:57783"/>
        <dbReference type="ChEBI" id="CHEBI:57792"/>
        <dbReference type="ChEBI" id="CHEBI:58262"/>
        <dbReference type="ChEBI" id="CHEBI:58349"/>
        <dbReference type="EC" id="1.1.1.267"/>
    </reaction>
    <physiologicalReaction direction="right-to-left" evidence="1">
        <dbReference type="Rhea" id="RHEA:13719"/>
    </physiologicalReaction>
</comment>
<comment type="cofactor">
    <cofactor evidence="1">
        <name>Mg(2+)</name>
        <dbReference type="ChEBI" id="CHEBI:18420"/>
    </cofactor>
    <cofactor evidence="1">
        <name>Mn(2+)</name>
        <dbReference type="ChEBI" id="CHEBI:29035"/>
    </cofactor>
</comment>
<comment type="pathway">
    <text evidence="1">Isoprenoid biosynthesis; isopentenyl diphosphate biosynthesis via DXP pathway; isopentenyl diphosphate from 1-deoxy-D-xylulose 5-phosphate: step 1/6.</text>
</comment>
<comment type="similarity">
    <text evidence="1">Belongs to the DXR family.</text>
</comment>
<organism>
    <name type="scientific">Pelodictyon phaeoclathratiforme (strain DSM 5477 / BU-1)</name>
    <dbReference type="NCBI Taxonomy" id="324925"/>
    <lineage>
        <taxon>Bacteria</taxon>
        <taxon>Pseudomonadati</taxon>
        <taxon>Chlorobiota</taxon>
        <taxon>Chlorobiia</taxon>
        <taxon>Chlorobiales</taxon>
        <taxon>Chlorobiaceae</taxon>
        <taxon>Chlorobium/Pelodictyon group</taxon>
        <taxon>Pelodictyon</taxon>
    </lineage>
</organism>
<feature type="chain" id="PRO_1000098507" description="1-deoxy-D-xylulose 5-phosphate reductoisomerase">
    <location>
        <begin position="1"/>
        <end position="382"/>
    </location>
</feature>
<feature type="binding site" evidence="1">
    <location>
        <position position="10"/>
    </location>
    <ligand>
        <name>NADPH</name>
        <dbReference type="ChEBI" id="CHEBI:57783"/>
    </ligand>
</feature>
<feature type="binding site" evidence="1">
    <location>
        <position position="11"/>
    </location>
    <ligand>
        <name>NADPH</name>
        <dbReference type="ChEBI" id="CHEBI:57783"/>
    </ligand>
</feature>
<feature type="binding site" evidence="1">
    <location>
        <position position="12"/>
    </location>
    <ligand>
        <name>NADPH</name>
        <dbReference type="ChEBI" id="CHEBI:57783"/>
    </ligand>
</feature>
<feature type="binding site" evidence="1">
    <location>
        <position position="13"/>
    </location>
    <ligand>
        <name>NADPH</name>
        <dbReference type="ChEBI" id="CHEBI:57783"/>
    </ligand>
</feature>
<feature type="binding site" evidence="1">
    <location>
        <position position="36"/>
    </location>
    <ligand>
        <name>NADPH</name>
        <dbReference type="ChEBI" id="CHEBI:57783"/>
    </ligand>
</feature>
<feature type="binding site" evidence="1">
    <location>
        <position position="122"/>
    </location>
    <ligand>
        <name>NADPH</name>
        <dbReference type="ChEBI" id="CHEBI:57783"/>
    </ligand>
</feature>
<feature type="binding site" evidence="1">
    <location>
        <position position="123"/>
    </location>
    <ligand>
        <name>1-deoxy-D-xylulose 5-phosphate</name>
        <dbReference type="ChEBI" id="CHEBI:57792"/>
    </ligand>
</feature>
<feature type="binding site" evidence="1">
    <location>
        <position position="124"/>
    </location>
    <ligand>
        <name>NADPH</name>
        <dbReference type="ChEBI" id="CHEBI:57783"/>
    </ligand>
</feature>
<feature type="binding site" evidence="1">
    <location>
        <position position="148"/>
    </location>
    <ligand>
        <name>Mn(2+)</name>
        <dbReference type="ChEBI" id="CHEBI:29035"/>
    </ligand>
</feature>
<feature type="binding site" evidence="1">
    <location>
        <position position="149"/>
    </location>
    <ligand>
        <name>1-deoxy-D-xylulose 5-phosphate</name>
        <dbReference type="ChEBI" id="CHEBI:57792"/>
    </ligand>
</feature>
<feature type="binding site" evidence="1">
    <location>
        <position position="150"/>
    </location>
    <ligand>
        <name>1-deoxy-D-xylulose 5-phosphate</name>
        <dbReference type="ChEBI" id="CHEBI:57792"/>
    </ligand>
</feature>
<feature type="binding site" evidence="1">
    <location>
        <position position="150"/>
    </location>
    <ligand>
        <name>Mn(2+)</name>
        <dbReference type="ChEBI" id="CHEBI:29035"/>
    </ligand>
</feature>
<feature type="binding site" evidence="1">
    <location>
        <position position="174"/>
    </location>
    <ligand>
        <name>1-deoxy-D-xylulose 5-phosphate</name>
        <dbReference type="ChEBI" id="CHEBI:57792"/>
    </ligand>
</feature>
<feature type="binding site" evidence="1">
    <location>
        <position position="197"/>
    </location>
    <ligand>
        <name>1-deoxy-D-xylulose 5-phosphate</name>
        <dbReference type="ChEBI" id="CHEBI:57792"/>
    </ligand>
</feature>
<feature type="binding site" evidence="1">
    <location>
        <position position="203"/>
    </location>
    <ligand>
        <name>NADPH</name>
        <dbReference type="ChEBI" id="CHEBI:57783"/>
    </ligand>
</feature>
<feature type="binding site" evidence="1">
    <location>
        <position position="210"/>
    </location>
    <ligand>
        <name>1-deoxy-D-xylulose 5-phosphate</name>
        <dbReference type="ChEBI" id="CHEBI:57792"/>
    </ligand>
</feature>
<feature type="binding site" evidence="1">
    <location>
        <position position="215"/>
    </location>
    <ligand>
        <name>1-deoxy-D-xylulose 5-phosphate</name>
        <dbReference type="ChEBI" id="CHEBI:57792"/>
    </ligand>
</feature>
<feature type="binding site" evidence="1">
    <location>
        <position position="216"/>
    </location>
    <ligand>
        <name>1-deoxy-D-xylulose 5-phosphate</name>
        <dbReference type="ChEBI" id="CHEBI:57792"/>
    </ligand>
</feature>
<feature type="binding site" evidence="1">
    <location>
        <position position="219"/>
    </location>
    <ligand>
        <name>1-deoxy-D-xylulose 5-phosphate</name>
        <dbReference type="ChEBI" id="CHEBI:57792"/>
    </ligand>
</feature>
<feature type="binding site" evidence="1">
    <location>
        <position position="219"/>
    </location>
    <ligand>
        <name>Mn(2+)</name>
        <dbReference type="ChEBI" id="CHEBI:29035"/>
    </ligand>
</feature>
<gene>
    <name evidence="1" type="primary">dxr</name>
    <name type="ordered locus">Ppha_0080</name>
</gene>
<evidence type="ECO:0000255" key="1">
    <source>
        <dbReference type="HAMAP-Rule" id="MF_00183"/>
    </source>
</evidence>
<proteinExistence type="inferred from homology"/>
<dbReference type="EC" id="1.1.1.267" evidence="1"/>
<dbReference type="EMBL" id="CP001110">
    <property type="protein sequence ID" value="ACF42436.1"/>
    <property type="molecule type" value="Genomic_DNA"/>
</dbReference>
<dbReference type="RefSeq" id="WP_012506934.1">
    <property type="nucleotide sequence ID" value="NC_011060.1"/>
</dbReference>
<dbReference type="SMR" id="B4SAR7"/>
<dbReference type="STRING" id="324925.Ppha_0080"/>
<dbReference type="KEGG" id="pph:Ppha_0080"/>
<dbReference type="eggNOG" id="COG0743">
    <property type="taxonomic scope" value="Bacteria"/>
</dbReference>
<dbReference type="HOGENOM" id="CLU_035714_4_0_10"/>
<dbReference type="OrthoDB" id="9806546at2"/>
<dbReference type="UniPathway" id="UPA00056">
    <property type="reaction ID" value="UER00092"/>
</dbReference>
<dbReference type="Proteomes" id="UP000002724">
    <property type="component" value="Chromosome"/>
</dbReference>
<dbReference type="GO" id="GO:0030604">
    <property type="term" value="F:1-deoxy-D-xylulose-5-phosphate reductoisomerase activity"/>
    <property type="evidence" value="ECO:0007669"/>
    <property type="project" value="UniProtKB-UniRule"/>
</dbReference>
<dbReference type="GO" id="GO:0030145">
    <property type="term" value="F:manganese ion binding"/>
    <property type="evidence" value="ECO:0007669"/>
    <property type="project" value="TreeGrafter"/>
</dbReference>
<dbReference type="GO" id="GO:0070402">
    <property type="term" value="F:NADPH binding"/>
    <property type="evidence" value="ECO:0007669"/>
    <property type="project" value="InterPro"/>
</dbReference>
<dbReference type="GO" id="GO:0051484">
    <property type="term" value="P:isopentenyl diphosphate biosynthetic process, methylerythritol 4-phosphate pathway involved in terpenoid biosynthetic process"/>
    <property type="evidence" value="ECO:0007669"/>
    <property type="project" value="TreeGrafter"/>
</dbReference>
<dbReference type="FunFam" id="1.10.1740.10:FF:000004">
    <property type="entry name" value="1-deoxy-D-xylulose 5-phosphate reductoisomerase"/>
    <property type="match status" value="1"/>
</dbReference>
<dbReference type="FunFam" id="3.40.50.720:FF:000045">
    <property type="entry name" value="1-deoxy-D-xylulose 5-phosphate reductoisomerase"/>
    <property type="match status" value="1"/>
</dbReference>
<dbReference type="Gene3D" id="1.10.1740.10">
    <property type="match status" value="1"/>
</dbReference>
<dbReference type="Gene3D" id="3.40.50.720">
    <property type="entry name" value="NAD(P)-binding Rossmann-like Domain"/>
    <property type="match status" value="1"/>
</dbReference>
<dbReference type="HAMAP" id="MF_00183">
    <property type="entry name" value="DXP_reductoisom"/>
    <property type="match status" value="1"/>
</dbReference>
<dbReference type="InterPro" id="IPR003821">
    <property type="entry name" value="DXP_reductoisomerase"/>
</dbReference>
<dbReference type="InterPro" id="IPR013644">
    <property type="entry name" value="DXP_reductoisomerase_C"/>
</dbReference>
<dbReference type="InterPro" id="IPR013512">
    <property type="entry name" value="DXP_reductoisomerase_N"/>
</dbReference>
<dbReference type="InterPro" id="IPR026877">
    <property type="entry name" value="DXPR_C"/>
</dbReference>
<dbReference type="InterPro" id="IPR036169">
    <property type="entry name" value="DXPR_C_sf"/>
</dbReference>
<dbReference type="InterPro" id="IPR036291">
    <property type="entry name" value="NAD(P)-bd_dom_sf"/>
</dbReference>
<dbReference type="NCBIfam" id="TIGR00243">
    <property type="entry name" value="Dxr"/>
    <property type="match status" value="1"/>
</dbReference>
<dbReference type="NCBIfam" id="NF009114">
    <property type="entry name" value="PRK12464.1"/>
    <property type="match status" value="1"/>
</dbReference>
<dbReference type="PANTHER" id="PTHR30525">
    <property type="entry name" value="1-DEOXY-D-XYLULOSE 5-PHOSPHATE REDUCTOISOMERASE"/>
    <property type="match status" value="1"/>
</dbReference>
<dbReference type="PANTHER" id="PTHR30525:SF0">
    <property type="entry name" value="1-DEOXY-D-XYLULOSE 5-PHOSPHATE REDUCTOISOMERASE, CHLOROPLASTIC"/>
    <property type="match status" value="1"/>
</dbReference>
<dbReference type="Pfam" id="PF08436">
    <property type="entry name" value="DXP_redisom_C"/>
    <property type="match status" value="1"/>
</dbReference>
<dbReference type="Pfam" id="PF02670">
    <property type="entry name" value="DXP_reductoisom"/>
    <property type="match status" value="1"/>
</dbReference>
<dbReference type="Pfam" id="PF13288">
    <property type="entry name" value="DXPR_C"/>
    <property type="match status" value="1"/>
</dbReference>
<dbReference type="PIRSF" id="PIRSF006205">
    <property type="entry name" value="Dxp_reductismrs"/>
    <property type="match status" value="1"/>
</dbReference>
<dbReference type="SUPFAM" id="SSF69055">
    <property type="entry name" value="1-deoxy-D-xylulose-5-phosphate reductoisomerase, C-terminal domain"/>
    <property type="match status" value="1"/>
</dbReference>
<dbReference type="SUPFAM" id="SSF55347">
    <property type="entry name" value="Glyceraldehyde-3-phosphate dehydrogenase-like, C-terminal domain"/>
    <property type="match status" value="1"/>
</dbReference>
<dbReference type="SUPFAM" id="SSF51735">
    <property type="entry name" value="NAD(P)-binding Rossmann-fold domains"/>
    <property type="match status" value="1"/>
</dbReference>
<accession>B4SAR7</accession>
<reference key="1">
    <citation type="submission" date="2008-06" db="EMBL/GenBank/DDBJ databases">
        <title>Complete sequence of Pelodictyon phaeoclathratiforme BU-1.</title>
        <authorList>
            <consortium name="US DOE Joint Genome Institute"/>
            <person name="Lucas S."/>
            <person name="Copeland A."/>
            <person name="Lapidus A."/>
            <person name="Glavina del Rio T."/>
            <person name="Dalin E."/>
            <person name="Tice H."/>
            <person name="Bruce D."/>
            <person name="Goodwin L."/>
            <person name="Pitluck S."/>
            <person name="Schmutz J."/>
            <person name="Larimer F."/>
            <person name="Land M."/>
            <person name="Hauser L."/>
            <person name="Kyrpides N."/>
            <person name="Mikhailova N."/>
            <person name="Liu Z."/>
            <person name="Li T."/>
            <person name="Zhao F."/>
            <person name="Overmann J."/>
            <person name="Bryant D.A."/>
            <person name="Richardson P."/>
        </authorList>
    </citation>
    <scope>NUCLEOTIDE SEQUENCE [LARGE SCALE GENOMIC DNA]</scope>
    <source>
        <strain>DSM 5477 / BU-1</strain>
    </source>
</reference>
<protein>
    <recommendedName>
        <fullName evidence="1">1-deoxy-D-xylulose 5-phosphate reductoisomerase</fullName>
        <shortName evidence="1">DXP reductoisomerase</shortName>
        <ecNumber evidence="1">1.1.1.267</ecNumber>
    </recommendedName>
    <alternativeName>
        <fullName evidence="1">1-deoxyxylulose-5-phosphate reductoisomerase</fullName>
    </alternativeName>
    <alternativeName>
        <fullName evidence="1">2-C-methyl-D-erythritol 4-phosphate synthase</fullName>
    </alternativeName>
</protein>
<sequence>MRSLAILGSTGSIGLSTLDVVRQHPEKFKIAGLAEGHDVALLAEQIKEFLPAAVSVRDADSVKKLQTLLGSHKPEIFHGLEGAAAIASAEGVDMVVSAIVGAAGLLPTVSAIKAGKHIALANKETLVVAGKLVSDLVKKHNVHLLPVDSEHSAIFQSLAGHRAEDVERIILTASGGPFRNTSAEELKNVTLEQALKHPQWTMGAKITIDSATMMNKGLEVIEAHWLFSMPAEKIGVVVHPQSIIHSMVEYIDGCVIAQLGSPDMRAPIAYALSWPERSESGIHKLDLPKIGTLTFEEPDMERFPALRLAFEALKAGLTYPAVLNAANEIAVAAFLDRKIGFTDIAATVEKTMQAHEAYDPIELDEYLQADRWAREMAKKFIA</sequence>
<name>DXR_PELPB</name>